<accession>C1CBZ3</accession>
<organism>
    <name type="scientific">Streptococcus pneumoniae (strain JJA)</name>
    <dbReference type="NCBI Taxonomy" id="488222"/>
    <lineage>
        <taxon>Bacteria</taxon>
        <taxon>Bacillati</taxon>
        <taxon>Bacillota</taxon>
        <taxon>Bacilli</taxon>
        <taxon>Lactobacillales</taxon>
        <taxon>Streptococcaceae</taxon>
        <taxon>Streptococcus</taxon>
    </lineage>
</organism>
<protein>
    <recommendedName>
        <fullName evidence="1">UPF0297 protein SPJ_0206</fullName>
    </recommendedName>
</protein>
<dbReference type="EMBL" id="CP000919">
    <property type="protein sequence ID" value="ACO20134.1"/>
    <property type="molecule type" value="Genomic_DNA"/>
</dbReference>
<dbReference type="RefSeq" id="WP_000507059.1">
    <property type="nucleotide sequence ID" value="NC_012466.1"/>
</dbReference>
<dbReference type="SMR" id="C1CBZ3"/>
<dbReference type="KEGG" id="sjj:SPJ_0206"/>
<dbReference type="HOGENOM" id="CLU_162466_0_0_9"/>
<dbReference type="Proteomes" id="UP000002206">
    <property type="component" value="Chromosome"/>
</dbReference>
<dbReference type="HAMAP" id="MF_01507">
    <property type="entry name" value="UPF0297"/>
    <property type="match status" value="1"/>
</dbReference>
<dbReference type="InterPro" id="IPR009309">
    <property type="entry name" value="IreB"/>
</dbReference>
<dbReference type="NCBIfam" id="NF003997">
    <property type="entry name" value="PRK05473.1"/>
    <property type="match status" value="1"/>
</dbReference>
<dbReference type="PANTHER" id="PTHR40067">
    <property type="entry name" value="UPF0297 PROTEIN YRZL"/>
    <property type="match status" value="1"/>
</dbReference>
<dbReference type="PANTHER" id="PTHR40067:SF1">
    <property type="entry name" value="UPF0297 PROTEIN YRZL"/>
    <property type="match status" value="1"/>
</dbReference>
<dbReference type="Pfam" id="PF06135">
    <property type="entry name" value="IreB"/>
    <property type="match status" value="1"/>
</dbReference>
<dbReference type="PIRSF" id="PIRSF037258">
    <property type="entry name" value="DUF965_bac"/>
    <property type="match status" value="1"/>
</dbReference>
<name>Y206_STRZJ</name>
<proteinExistence type="inferred from homology"/>
<evidence type="ECO:0000255" key="1">
    <source>
        <dbReference type="HAMAP-Rule" id="MF_01507"/>
    </source>
</evidence>
<sequence>MGFTEETVRFKLDDSNKKEISETLTDVYASLNDKGYNPINQIVGYVLSGDPAYVPRYNNARNQIRKYERDEIVEELVRYYLKGQGVDL</sequence>
<feature type="chain" id="PRO_1000185049" description="UPF0297 protein SPJ_0206">
    <location>
        <begin position="1"/>
        <end position="88"/>
    </location>
</feature>
<gene>
    <name type="ordered locus">SPJ_0206</name>
</gene>
<comment type="similarity">
    <text evidence="1">Belongs to the UPF0297 family.</text>
</comment>
<reference key="1">
    <citation type="journal article" date="2010" name="Genome Biol.">
        <title>Structure and dynamics of the pan-genome of Streptococcus pneumoniae and closely related species.</title>
        <authorList>
            <person name="Donati C."/>
            <person name="Hiller N.L."/>
            <person name="Tettelin H."/>
            <person name="Muzzi A."/>
            <person name="Croucher N.J."/>
            <person name="Angiuoli S.V."/>
            <person name="Oggioni M."/>
            <person name="Dunning Hotopp J.C."/>
            <person name="Hu F.Z."/>
            <person name="Riley D.R."/>
            <person name="Covacci A."/>
            <person name="Mitchell T.J."/>
            <person name="Bentley S.D."/>
            <person name="Kilian M."/>
            <person name="Ehrlich G.D."/>
            <person name="Rappuoli R."/>
            <person name="Moxon E.R."/>
            <person name="Masignani V."/>
        </authorList>
    </citation>
    <scope>NUCLEOTIDE SEQUENCE [LARGE SCALE GENOMIC DNA]</scope>
    <source>
        <strain>JJA</strain>
    </source>
</reference>